<sequence>GFGALFKFL</sequence>
<accession>B3EWU6</accession>
<organism>
    <name type="scientific">Cupiennius salei</name>
    <name type="common">American wandering spider</name>
    <dbReference type="NCBI Taxonomy" id="6928"/>
    <lineage>
        <taxon>Eukaryota</taxon>
        <taxon>Metazoa</taxon>
        <taxon>Ecdysozoa</taxon>
        <taxon>Arthropoda</taxon>
        <taxon>Chelicerata</taxon>
        <taxon>Arachnida</taxon>
        <taxon>Araneae</taxon>
        <taxon>Araneomorphae</taxon>
        <taxon>Entelegynae</taxon>
        <taxon>Lycosoidea</taxon>
        <taxon>Ctenidae</taxon>
        <taxon>Cupiennius</taxon>
    </lineage>
</organism>
<reference key="1">
    <citation type="journal article" date="2012" name="FEBS J.">
        <title>Multicomponent venom of the spider Cupiennius salei: a bioanalytical investigation applying different strategies.</title>
        <authorList>
            <person name="Trachsel C."/>
            <person name="Siegemund D."/>
            <person name="Kampfer U."/>
            <person name="Kopp L.S."/>
            <person name="Buhr C."/>
            <person name="Grossmann J."/>
            <person name="Luthi C."/>
            <person name="Cunningham M."/>
            <person name="Nentwig W."/>
            <person name="Kuhn-Nentwig L."/>
            <person name="Schurch S."/>
            <person name="Schaller J."/>
        </authorList>
    </citation>
    <scope>PROTEIN SEQUENCE</scope>
    <scope>MASS SPECTROMETRY</scope>
    <source>
        <tissue>Venom</tissue>
    </source>
</reference>
<comment type="subcellular location">
    <subcellularLocation>
        <location evidence="1">Secreted</location>
    </subcellularLocation>
</comment>
<comment type="tissue specificity">
    <text evidence="4">Expressed by the venom gland.</text>
</comment>
<comment type="mass spectrometry"/>
<comment type="similarity">
    <text evidence="3">Belongs to the cationic peptide 04 (cupiennin) family. 03 subfamily.</text>
</comment>
<name>TXS1F_CUPSA</name>
<feature type="peptide" id="PRO_0000421205" description="Short cationic peptide-1f" evidence="1">
    <location>
        <begin position="1"/>
        <end position="9"/>
    </location>
</feature>
<keyword id="KW-0903">Direct protein sequencing</keyword>
<keyword id="KW-0964">Secreted</keyword>
<keyword id="KW-0800">Toxin</keyword>
<evidence type="ECO:0000269" key="1">
    <source>
    </source>
</evidence>
<evidence type="ECO:0000303" key="2">
    <source>
    </source>
</evidence>
<evidence type="ECO:0000305" key="3"/>
<evidence type="ECO:0000305" key="4">
    <source>
    </source>
</evidence>
<protein>
    <recommendedName>
        <fullName evidence="2">Short cationic peptide-1f</fullName>
        <shortName evidence="2">SCP-1f</shortName>
    </recommendedName>
    <alternativeName>
        <fullName evidence="2">Cupiennin 1-like peptide-1f</fullName>
    </alternativeName>
    <alternativeName>
        <fullName evidence="3">Truncated variant of Cupiennin 1 family</fullName>
    </alternativeName>
</protein>
<proteinExistence type="evidence at protein level"/>
<dbReference type="GO" id="GO:0005576">
    <property type="term" value="C:extracellular region"/>
    <property type="evidence" value="ECO:0007669"/>
    <property type="project" value="UniProtKB-SubCell"/>
</dbReference>
<dbReference type="GO" id="GO:0090729">
    <property type="term" value="F:toxin activity"/>
    <property type="evidence" value="ECO:0007669"/>
    <property type="project" value="UniProtKB-KW"/>
</dbReference>